<keyword id="KW-0963">Cytoplasm</keyword>
<keyword id="KW-0489">Methyltransferase</keyword>
<keyword id="KW-0694">RNA-binding</keyword>
<keyword id="KW-0698">rRNA processing</keyword>
<keyword id="KW-0949">S-adenosyl-L-methionine</keyword>
<keyword id="KW-0808">Transferase</keyword>
<reference key="1">
    <citation type="journal article" date="2011" name="J. Bacteriol.">
        <title>Genome sequence of lineage III Listeria monocytogenes strain HCC23.</title>
        <authorList>
            <person name="Steele C.L."/>
            <person name="Donaldson J.R."/>
            <person name="Paul D."/>
            <person name="Banes M.M."/>
            <person name="Arick T."/>
            <person name="Bridges S.M."/>
            <person name="Lawrence M.L."/>
        </authorList>
    </citation>
    <scope>NUCLEOTIDE SEQUENCE [LARGE SCALE GENOMIC DNA]</scope>
    <source>
        <strain>HCC23</strain>
    </source>
</reference>
<sequence>MSKDIATPGRTTEILKKYGFLFKKSLGQNFLIDSNILTRITDTAEITKETNVIEIGPGIGALTEQLAKTANEVVAFEIDQRLLPILDDTLSAYSNVQVVHGDVLKADVEEVVAEQFAKPELPLKIVANLPYYVTTPIILKLLHDNIPADSMTFMLQKEVADRISAVPSTKSYGSLTIAIQFYMEAELAFIVPKTVFMPQPNVDSAVIHLKRRKEPLAEVNDEEFFFEVTRASFAQRRKTLWNNLASKFPALKPRKDELVEGLNAIGIDLIRRGETLDIPEFAKLSNFLGDFLKEK</sequence>
<proteinExistence type="inferred from homology"/>
<dbReference type="EC" id="2.1.1.182" evidence="1"/>
<dbReference type="EMBL" id="CP001175">
    <property type="protein sequence ID" value="ACK40790.1"/>
    <property type="molecule type" value="Genomic_DNA"/>
</dbReference>
<dbReference type="RefSeq" id="WP_012582100.1">
    <property type="nucleotide sequence ID" value="NC_011660.1"/>
</dbReference>
<dbReference type="SMR" id="B8DGN7"/>
<dbReference type="KEGG" id="lmh:LMHCC_2455"/>
<dbReference type="HOGENOM" id="CLU_041220_0_0_9"/>
<dbReference type="GO" id="GO:0005829">
    <property type="term" value="C:cytosol"/>
    <property type="evidence" value="ECO:0007669"/>
    <property type="project" value="TreeGrafter"/>
</dbReference>
<dbReference type="GO" id="GO:0052908">
    <property type="term" value="F:16S rRNA (adenine(1518)-N(6)/adenine(1519)-N(6))-dimethyltransferase activity"/>
    <property type="evidence" value="ECO:0007669"/>
    <property type="project" value="UniProtKB-EC"/>
</dbReference>
<dbReference type="GO" id="GO:0003723">
    <property type="term" value="F:RNA binding"/>
    <property type="evidence" value="ECO:0007669"/>
    <property type="project" value="UniProtKB-KW"/>
</dbReference>
<dbReference type="CDD" id="cd02440">
    <property type="entry name" value="AdoMet_MTases"/>
    <property type="match status" value="1"/>
</dbReference>
<dbReference type="FunFam" id="1.10.8.100:FF:000002">
    <property type="entry name" value="Ribosomal RNA small subunit methyltransferase A"/>
    <property type="match status" value="1"/>
</dbReference>
<dbReference type="FunFam" id="3.40.50.150:FF:000023">
    <property type="entry name" value="Ribosomal RNA small subunit methyltransferase A"/>
    <property type="match status" value="1"/>
</dbReference>
<dbReference type="Gene3D" id="1.10.8.100">
    <property type="entry name" value="Ribosomal RNA adenine dimethylase-like, domain 2"/>
    <property type="match status" value="1"/>
</dbReference>
<dbReference type="Gene3D" id="3.40.50.150">
    <property type="entry name" value="Vaccinia Virus protein VP39"/>
    <property type="match status" value="1"/>
</dbReference>
<dbReference type="HAMAP" id="MF_00607">
    <property type="entry name" value="16SrRNA_methyltr_A"/>
    <property type="match status" value="1"/>
</dbReference>
<dbReference type="InterPro" id="IPR001737">
    <property type="entry name" value="KsgA/Erm"/>
</dbReference>
<dbReference type="InterPro" id="IPR023165">
    <property type="entry name" value="rRNA_Ade_diMease-like_C"/>
</dbReference>
<dbReference type="InterPro" id="IPR020596">
    <property type="entry name" value="rRNA_Ade_Mease_Trfase_CS"/>
</dbReference>
<dbReference type="InterPro" id="IPR020598">
    <property type="entry name" value="rRNA_Ade_methylase_Trfase_N"/>
</dbReference>
<dbReference type="InterPro" id="IPR011530">
    <property type="entry name" value="rRNA_adenine_dimethylase"/>
</dbReference>
<dbReference type="InterPro" id="IPR029063">
    <property type="entry name" value="SAM-dependent_MTases_sf"/>
</dbReference>
<dbReference type="NCBIfam" id="TIGR00755">
    <property type="entry name" value="ksgA"/>
    <property type="match status" value="1"/>
</dbReference>
<dbReference type="PANTHER" id="PTHR11727">
    <property type="entry name" value="DIMETHYLADENOSINE TRANSFERASE"/>
    <property type="match status" value="1"/>
</dbReference>
<dbReference type="PANTHER" id="PTHR11727:SF7">
    <property type="entry name" value="DIMETHYLADENOSINE TRANSFERASE-RELATED"/>
    <property type="match status" value="1"/>
</dbReference>
<dbReference type="Pfam" id="PF00398">
    <property type="entry name" value="RrnaAD"/>
    <property type="match status" value="1"/>
</dbReference>
<dbReference type="SMART" id="SM00650">
    <property type="entry name" value="rADc"/>
    <property type="match status" value="1"/>
</dbReference>
<dbReference type="SUPFAM" id="SSF53335">
    <property type="entry name" value="S-adenosyl-L-methionine-dependent methyltransferases"/>
    <property type="match status" value="1"/>
</dbReference>
<dbReference type="PROSITE" id="PS01131">
    <property type="entry name" value="RRNA_A_DIMETH"/>
    <property type="match status" value="1"/>
</dbReference>
<dbReference type="PROSITE" id="PS51689">
    <property type="entry name" value="SAM_RNA_A_N6_MT"/>
    <property type="match status" value="1"/>
</dbReference>
<feature type="chain" id="PRO_1000194387" description="Ribosomal RNA small subunit methyltransferase A">
    <location>
        <begin position="1"/>
        <end position="295"/>
    </location>
</feature>
<feature type="binding site" evidence="1">
    <location>
        <position position="29"/>
    </location>
    <ligand>
        <name>S-adenosyl-L-methionine</name>
        <dbReference type="ChEBI" id="CHEBI:59789"/>
    </ligand>
</feature>
<feature type="binding site" evidence="1">
    <location>
        <position position="31"/>
    </location>
    <ligand>
        <name>S-adenosyl-L-methionine</name>
        <dbReference type="ChEBI" id="CHEBI:59789"/>
    </ligand>
</feature>
<feature type="binding site" evidence="1">
    <location>
        <position position="56"/>
    </location>
    <ligand>
        <name>S-adenosyl-L-methionine</name>
        <dbReference type="ChEBI" id="CHEBI:59789"/>
    </ligand>
</feature>
<feature type="binding site" evidence="1">
    <location>
        <position position="77"/>
    </location>
    <ligand>
        <name>S-adenosyl-L-methionine</name>
        <dbReference type="ChEBI" id="CHEBI:59789"/>
    </ligand>
</feature>
<feature type="binding site" evidence="1">
    <location>
        <position position="102"/>
    </location>
    <ligand>
        <name>S-adenosyl-L-methionine</name>
        <dbReference type="ChEBI" id="CHEBI:59789"/>
    </ligand>
</feature>
<feature type="binding site" evidence="1">
    <location>
        <position position="128"/>
    </location>
    <ligand>
        <name>S-adenosyl-L-methionine</name>
        <dbReference type="ChEBI" id="CHEBI:59789"/>
    </ligand>
</feature>
<comment type="function">
    <text evidence="1">Specifically dimethylates two adjacent adenosines (A1518 and A1519) in the loop of a conserved hairpin near the 3'-end of 16S rRNA in the 30S particle. May play a critical role in biogenesis of 30S subunits.</text>
</comment>
<comment type="catalytic activity">
    <reaction evidence="1">
        <text>adenosine(1518)/adenosine(1519) in 16S rRNA + 4 S-adenosyl-L-methionine = N(6)-dimethyladenosine(1518)/N(6)-dimethyladenosine(1519) in 16S rRNA + 4 S-adenosyl-L-homocysteine + 4 H(+)</text>
        <dbReference type="Rhea" id="RHEA:19609"/>
        <dbReference type="Rhea" id="RHEA-COMP:10232"/>
        <dbReference type="Rhea" id="RHEA-COMP:10233"/>
        <dbReference type="ChEBI" id="CHEBI:15378"/>
        <dbReference type="ChEBI" id="CHEBI:57856"/>
        <dbReference type="ChEBI" id="CHEBI:59789"/>
        <dbReference type="ChEBI" id="CHEBI:74411"/>
        <dbReference type="ChEBI" id="CHEBI:74493"/>
        <dbReference type="EC" id="2.1.1.182"/>
    </reaction>
</comment>
<comment type="subcellular location">
    <subcellularLocation>
        <location evidence="1">Cytoplasm</location>
    </subcellularLocation>
</comment>
<comment type="similarity">
    <text evidence="1">Belongs to the class I-like SAM-binding methyltransferase superfamily. rRNA adenine N(6)-methyltransferase family. RsmA subfamily.</text>
</comment>
<accession>B8DGN7</accession>
<evidence type="ECO:0000255" key="1">
    <source>
        <dbReference type="HAMAP-Rule" id="MF_00607"/>
    </source>
</evidence>
<protein>
    <recommendedName>
        <fullName evidence="1">Ribosomal RNA small subunit methyltransferase A</fullName>
        <ecNumber evidence="1">2.1.1.182</ecNumber>
    </recommendedName>
    <alternativeName>
        <fullName evidence="1">16S rRNA (adenine(1518)-N(6)/adenine(1519)-N(6))-dimethyltransferase</fullName>
    </alternativeName>
    <alternativeName>
        <fullName evidence="1">16S rRNA dimethyladenosine transferase</fullName>
    </alternativeName>
    <alternativeName>
        <fullName evidence="1">16S rRNA dimethylase</fullName>
    </alternativeName>
    <alternativeName>
        <fullName evidence="1">S-adenosylmethionine-6-N', N'-adenosyl(rRNA) dimethyltransferase</fullName>
    </alternativeName>
</protein>
<gene>
    <name evidence="1" type="primary">rsmA</name>
    <name evidence="1" type="synonym">ksgA</name>
    <name type="ordered locus">LMHCC_2455</name>
</gene>
<organism>
    <name type="scientific">Listeria monocytogenes serotype 4a (strain HCC23)</name>
    <dbReference type="NCBI Taxonomy" id="552536"/>
    <lineage>
        <taxon>Bacteria</taxon>
        <taxon>Bacillati</taxon>
        <taxon>Bacillota</taxon>
        <taxon>Bacilli</taxon>
        <taxon>Bacillales</taxon>
        <taxon>Listeriaceae</taxon>
        <taxon>Listeria</taxon>
    </lineage>
</organism>
<name>RSMA_LISMH</name>